<proteinExistence type="inferred from homology"/>
<accession>Q9QBU0</accession>
<comment type="function">
    <molecule>Replicase large subunit</molecule>
    <text evidence="1">Is an RNA-dependent RNA polymerase active in viral RNA replication.</text>
</comment>
<comment type="function">
    <molecule>Replicase small subunit</molecule>
    <text evidence="6">Is a methyltransferase active in RNA capping and an RNA helicase. Methyltransferase displays a cytoplasmic capping enzyme activity. This function is necessary since all viral RNAs are synthesized in the cytoplasm, and host capping enzymes are restricted to the nucleus. Helicase region probably exhibits NTPase and RNA unwinding activities (Potential).</text>
</comment>
<comment type="catalytic activity">
    <reaction evidence="3">
        <text>RNA(n) + a ribonucleoside 5'-triphosphate = RNA(n+1) + diphosphate</text>
        <dbReference type="Rhea" id="RHEA:21248"/>
        <dbReference type="Rhea" id="RHEA-COMP:14527"/>
        <dbReference type="Rhea" id="RHEA-COMP:17342"/>
        <dbReference type="ChEBI" id="CHEBI:33019"/>
        <dbReference type="ChEBI" id="CHEBI:61557"/>
        <dbReference type="ChEBI" id="CHEBI:140395"/>
        <dbReference type="EC" id="2.7.7.48"/>
    </reaction>
</comment>
<comment type="catalytic activity">
    <reaction>
        <text>ATP + H2O = ADP + phosphate + H(+)</text>
        <dbReference type="Rhea" id="RHEA:13065"/>
        <dbReference type="ChEBI" id="CHEBI:15377"/>
        <dbReference type="ChEBI" id="CHEBI:15378"/>
        <dbReference type="ChEBI" id="CHEBI:30616"/>
        <dbReference type="ChEBI" id="CHEBI:43474"/>
        <dbReference type="ChEBI" id="CHEBI:456216"/>
        <dbReference type="EC" id="3.6.4.13"/>
    </reaction>
</comment>
<comment type="subunit">
    <text evidence="1">Heterodimer of a large and a small subunit.</text>
</comment>
<comment type="miscellaneous">
    <text>The replicase large subunit is translated as a fusion protein by episodic readthrough of a termination codon. When readthrough of the terminator codon TGA occurs between the codons for 1303-Lys and 1305-Arg, this results in the addition of the RdRp region.</text>
</comment>
<comment type="similarity">
    <text evidence="6">Belongs to the ssRNA positive-strand viruses RNA-directed RNA polymerase family.</text>
</comment>
<evidence type="ECO:0000250" key="1"/>
<evidence type="ECO:0000255" key="2"/>
<evidence type="ECO:0000255" key="3">
    <source>
        <dbReference type="PROSITE-ProRule" id="PRU00539"/>
    </source>
</evidence>
<evidence type="ECO:0000255" key="4">
    <source>
        <dbReference type="PROSITE-ProRule" id="PRU01079"/>
    </source>
</evidence>
<evidence type="ECO:0000256" key="5">
    <source>
        <dbReference type="SAM" id="MobiDB-lite"/>
    </source>
</evidence>
<evidence type="ECO:0000305" key="6"/>
<sequence length="1812" mass="206364">MDQSILSKITSDDYVNAILHTSATRVGSDLHNAMCNVIVDQIKDSTEKNKKKKKIDVKRNLNEDQIQLLAELFPERRVVTSSVHRGTHSMAAAMRKIETDVIFTSFPKNGVIYDIGGNWATHAKRDDGGFVHCCCPILDFRDAQRKMTRLIDFNRFIDDAKVVSAEKAAVAAQIKKDCDLISENAKKDAYDANDLNGTWFCQNKFEDCVYDHSTLGDGKKEAYGMAIHSIYDIHLVDLVSAMERKKVRVLKGTFLFSADIIIGKKRGELPSVNGFYIIDGESIKYSFYDDPNCGYEHNLNSLMLYVTKTFVKAAGGAVYYLELTEMRGDTMFFTITDASEARVMGVLHDSSTKCLPLNKRDLVVFPLFDIDRATDELVFREELLSREFVNRALEYAFQLKDNQVTAEGLISYFASTNNAVVIGGSARKTSEKVDPKLLPMITTTLMVYQELQKAKQKRVLGKLKSKVKEELTLSGILESVVHRVFGRQSLYQRGLGVFAKWMQYSYGQDLVGIHDVPLYLEINDRIKLGSALKNVNGFSLSFSELDEKVSLYEEYERERQRISDEIVSEKIGLIGEGYVKVGESSLKPKQKVASRDGMAQWVSGECHLYNTMKCEEKPVEKPRRFSKVVLEEWISEGNCFALNNSFGDEVHWFDSLKEACGRAWRKQVSAVTFSDAEYFDNIENTENEELEEEEVIKTTEQVEQDWPIGNLPDVDPDDSASAQVCLTESASTSSDEDCDPMEQLIVAACERAFATKKFEEVTMDSQVVQSEEIEIVREGEHAHANLSSGESESSSQSQELVAVGSVPLSKWAQMVEDSEVRARQCAVDHDLSWDEVKYAKMPERPEEAEGDDFRTKAKREFLWYLKCKLVADKSTLVEIMRDFIYGQFHSGACETPKNACFLSYEKNVCGEWMFGKRYRHPSKGASSYAVRFTREDWKRAKLIKLQWKNAKAEENGEMSSDNSDKPIVPQGETGIYLFCDITFLMNEIPILNRLEISFKKRVQRRAPRITLVDGVPGCGKSTYVVKEANLVNQYVVTIGREAAEDLRERFKSERNATATQLKRVRTVDSYLLNDTQSRANVLHFDEALMAHAGMVYFCADDLSARSVICQGDSQQIPFINRVESITLRYSKLEIDNVVEKRLTYRSPLDVASYLTKKNFYGTSVVTSANPLVRSLKTVGPRDGMTSIYSIPKIPGTQYLTFLQSEKEEMRQYLGRGNWNVNTVHESQGKTYDNVVLCRLKATDNEIYPGGRNSSPYMVVGVTRHRRSLVYYTKAEDKLYFDLAEMLSVQEGKLMKHLHEEGVKXRQASKYEEIMVSDNAVTVPDVGNLVDLQEMYDIAFPGNSIVDTYFDGYEVATGGLQIDMNASLTYYPNRQMKMWKECRGMYPMLRTAMPEKRQSGLAEGLLALNKRNMAAPKLQESVNEFEVIESTIEKAKKVFFDESRIDNSKLETFEGAARWWVKQSCTAQKQMLADVRTLSEIDVTSYNFMIKGDVKPKLDLSPQSEYSALQTVVYPDKIVNALFGPIMKEINERIRVALKPHVIYNTRMTSDELDPAVEFLDVREDHESVEIDFSKFDKSKTSLHIRVVIELYKLFGLDEMIAYLWEKSQCQTTIKDRVNGIIAQILYQQESGNCDTYGSNTWSAALSLLESLPLEKATFMIFGGDDSLIFFPKGMVIEDPCRRLASMWNFDCKLFNFKNNSFCGKFLIKVGEKYKFAPDPYKLLTKLGRKDIKNSDLLSEIFTSIGDNYKSYDDYRVLEALNVAVMERYKLRCDVMFGLLALKKYINSFDLFASLFSHKGRYQRVEVGRNFEW</sequence>
<dbReference type="EC" id="2.1.1.-"/>
<dbReference type="EC" id="2.7.7.-"/>
<dbReference type="EC" id="2.7.7.48"/>
<dbReference type="EC" id="3.6.4.13"/>
<dbReference type="EMBL" id="AJ238607">
    <property type="protein sequence ID" value="CAB58364.1"/>
    <property type="molecule type" value="Genomic_RNA"/>
</dbReference>
<dbReference type="KEGG" id="vg:991177"/>
<dbReference type="Proteomes" id="UP000006715">
    <property type="component" value="Genome"/>
</dbReference>
<dbReference type="GO" id="GO:0005524">
    <property type="term" value="F:ATP binding"/>
    <property type="evidence" value="ECO:0007669"/>
    <property type="project" value="UniProtKB-KW"/>
</dbReference>
<dbReference type="GO" id="GO:0016887">
    <property type="term" value="F:ATP hydrolysis activity"/>
    <property type="evidence" value="ECO:0007669"/>
    <property type="project" value="RHEA"/>
</dbReference>
<dbReference type="GO" id="GO:0008174">
    <property type="term" value="F:mRNA methyltransferase activity"/>
    <property type="evidence" value="ECO:0007669"/>
    <property type="project" value="InterPro"/>
</dbReference>
<dbReference type="GO" id="GO:0003723">
    <property type="term" value="F:RNA binding"/>
    <property type="evidence" value="ECO:0007669"/>
    <property type="project" value="UniProtKB-KW"/>
</dbReference>
<dbReference type="GO" id="GO:0003724">
    <property type="term" value="F:RNA helicase activity"/>
    <property type="evidence" value="ECO:0007669"/>
    <property type="project" value="UniProtKB-EC"/>
</dbReference>
<dbReference type="GO" id="GO:0003968">
    <property type="term" value="F:RNA-directed RNA polymerase activity"/>
    <property type="evidence" value="ECO:0007669"/>
    <property type="project" value="UniProtKB-KW"/>
</dbReference>
<dbReference type="GO" id="GO:0006351">
    <property type="term" value="P:DNA-templated transcription"/>
    <property type="evidence" value="ECO:0007669"/>
    <property type="project" value="InterPro"/>
</dbReference>
<dbReference type="GO" id="GO:0032259">
    <property type="term" value="P:methylation"/>
    <property type="evidence" value="ECO:0007669"/>
    <property type="project" value="UniProtKB-KW"/>
</dbReference>
<dbReference type="GO" id="GO:0016556">
    <property type="term" value="P:mRNA modification"/>
    <property type="evidence" value="ECO:0007669"/>
    <property type="project" value="InterPro"/>
</dbReference>
<dbReference type="GO" id="GO:0006396">
    <property type="term" value="P:RNA processing"/>
    <property type="evidence" value="ECO:0007669"/>
    <property type="project" value="InterPro"/>
</dbReference>
<dbReference type="GO" id="GO:0039694">
    <property type="term" value="P:viral RNA genome replication"/>
    <property type="evidence" value="ECO:0007669"/>
    <property type="project" value="InterPro"/>
</dbReference>
<dbReference type="CDD" id="cd23251">
    <property type="entry name" value="Virgaviridae_RdRp"/>
    <property type="match status" value="1"/>
</dbReference>
<dbReference type="Gene3D" id="3.40.50.300">
    <property type="entry name" value="P-loop containing nucleotide triphosphate hydrolases"/>
    <property type="match status" value="2"/>
</dbReference>
<dbReference type="InterPro" id="IPR027351">
    <property type="entry name" value="(+)RNA_virus_helicase_core_dom"/>
</dbReference>
<dbReference type="InterPro" id="IPR002588">
    <property type="entry name" value="Alphavirus-like_MT_dom"/>
</dbReference>
<dbReference type="InterPro" id="IPR043502">
    <property type="entry name" value="DNA/RNA_pol_sf"/>
</dbReference>
<dbReference type="InterPro" id="IPR027417">
    <property type="entry name" value="P-loop_NTPase"/>
</dbReference>
<dbReference type="InterPro" id="IPR001788">
    <property type="entry name" value="RNA-dep_RNA_pol_alsuvir"/>
</dbReference>
<dbReference type="InterPro" id="IPR007094">
    <property type="entry name" value="RNA-dir_pol_PSvirus"/>
</dbReference>
<dbReference type="InterPro" id="IPR047310">
    <property type="entry name" value="Virgaviridae_RdRp"/>
</dbReference>
<dbReference type="InterPro" id="IPR013664">
    <property type="entry name" value="Virgavirus_MeTrfase_C"/>
</dbReference>
<dbReference type="Pfam" id="PF00978">
    <property type="entry name" value="RdRP_2"/>
    <property type="match status" value="1"/>
</dbReference>
<dbReference type="Pfam" id="PF01443">
    <property type="entry name" value="Viral_helicase1"/>
    <property type="match status" value="1"/>
</dbReference>
<dbReference type="Pfam" id="PF01660">
    <property type="entry name" value="Vmethyltransf"/>
    <property type="match status" value="1"/>
</dbReference>
<dbReference type="Pfam" id="PF08456">
    <property type="entry name" value="Vmethyltransf_C"/>
    <property type="match status" value="1"/>
</dbReference>
<dbReference type="SUPFAM" id="SSF56672">
    <property type="entry name" value="DNA/RNA polymerases"/>
    <property type="match status" value="1"/>
</dbReference>
<dbReference type="SUPFAM" id="SSF52540">
    <property type="entry name" value="P-loop containing nucleoside triphosphate hydrolases"/>
    <property type="match status" value="2"/>
</dbReference>
<dbReference type="PROSITE" id="PS51743">
    <property type="entry name" value="ALPHAVIRUS_MT"/>
    <property type="match status" value="1"/>
</dbReference>
<dbReference type="PROSITE" id="PS51657">
    <property type="entry name" value="PSRV_HELICASE"/>
    <property type="match status" value="1"/>
</dbReference>
<dbReference type="PROSITE" id="PS50507">
    <property type="entry name" value="RDRP_SSRNA_POS"/>
    <property type="match status" value="1"/>
</dbReference>
<reference key="1">
    <citation type="journal article" date="1999" name="J. Gen. Virol.">
        <title>Complete sequence of RNA 1 and the presence of tRNA-like structures in all RNAs of Potato mop-top virus, genus Pomovirus.</title>
        <authorList>
            <person name="Savenkov E.I."/>
            <person name="Sandgren M."/>
            <person name="Valkonen J.P."/>
        </authorList>
    </citation>
    <scope>NUCLEOTIDE SEQUENCE [GENOMIC RNA]</scope>
</reference>
<protein>
    <recommendedName>
        <fullName>Replicase large subunit</fullName>
        <ecNumber>2.1.1.-</ecNumber>
        <ecNumber>2.7.7.-</ecNumber>
        <ecNumber>2.7.7.48</ecNumber>
        <ecNumber>3.6.4.13</ecNumber>
    </recommendedName>
    <alternativeName>
        <fullName>RNA-directed RNA polymerase</fullName>
    </alternativeName>
    <component>
        <recommendedName>
            <fullName>Replicase small subunit</fullName>
            <ecNumber>2.1.1.-</ecNumber>
            <ecNumber>2.7.7.-</ecNumber>
            <ecNumber>3.6.4.13</ecNumber>
        </recommendedName>
        <alternativeName>
            <fullName>Methyltransferase/RNA helicase</fullName>
        </alternativeName>
    </component>
</protein>
<name>RDRP_PMTVS</name>
<keyword id="KW-0067">ATP-binding</keyword>
<keyword id="KW-0175">Coiled coil</keyword>
<keyword id="KW-0347">Helicase</keyword>
<keyword id="KW-0378">Hydrolase</keyword>
<keyword id="KW-0489">Methyltransferase</keyword>
<keyword id="KW-0547">Nucleotide-binding</keyword>
<keyword id="KW-0548">Nucleotidyltransferase</keyword>
<keyword id="KW-1185">Reference proteome</keyword>
<keyword id="KW-0694">RNA-binding</keyword>
<keyword id="KW-0696">RNA-directed RNA polymerase</keyword>
<keyword id="KW-0808">Transferase</keyword>
<keyword id="KW-0693">Viral RNA replication</keyword>
<feature type="chain" id="PRO_0000409453" description="Replicase large subunit">
    <location>
        <begin position="1"/>
        <end position="1812"/>
    </location>
</feature>
<feature type="chain" id="PRO_5000065197" description="Replicase small subunit">
    <location>
        <begin position="1"/>
        <end position="1303"/>
    </location>
</feature>
<feature type="domain" description="Alphavirus-like MT" evidence="4">
    <location>
        <begin position="79"/>
        <end position="306"/>
    </location>
</feature>
<feature type="domain" description="(+)RNA virus helicase ATP-binding">
    <location>
        <begin position="979"/>
        <end position="1140"/>
    </location>
</feature>
<feature type="domain" description="(+)RNA virus helicase C-terminal">
    <location>
        <begin position="1141"/>
        <end position="1303"/>
    </location>
</feature>
<feature type="domain" description="RdRp catalytic" evidence="3">
    <location>
        <begin position="1565"/>
        <end position="1678"/>
    </location>
</feature>
<feature type="region of interest" description="Methyltransferase">
    <location>
        <begin position="58"/>
        <end position="820"/>
    </location>
</feature>
<feature type="region of interest" description="Disordered" evidence="5">
    <location>
        <begin position="701"/>
        <end position="738"/>
    </location>
</feature>
<feature type="region of interest" description="Helicase">
    <location>
        <begin position="1010"/>
        <end position="1272"/>
    </location>
</feature>
<feature type="coiled-coil region" evidence="2">
    <location>
        <begin position="543"/>
        <end position="573"/>
    </location>
</feature>
<feature type="compositionally biased region" description="Polar residues" evidence="5">
    <location>
        <begin position="720"/>
        <end position="733"/>
    </location>
</feature>
<feature type="binding site" evidence="2">
    <location>
        <begin position="1014"/>
        <end position="1021"/>
    </location>
    <ligand>
        <name>ATP</name>
        <dbReference type="ChEBI" id="CHEBI:30616"/>
    </ligand>
</feature>
<organism>
    <name type="scientific">Potato mop-top virus (isolate Potato/Sweden/Sw)</name>
    <name type="common">PMTV</name>
    <dbReference type="NCBI Taxonomy" id="652839"/>
    <lineage>
        <taxon>Viruses</taxon>
        <taxon>Riboviria</taxon>
        <taxon>Orthornavirae</taxon>
        <taxon>Kitrinoviricota</taxon>
        <taxon>Alsuviricetes</taxon>
        <taxon>Martellivirales</taxon>
        <taxon>Virgaviridae</taxon>
        <taxon>Pomovirus</taxon>
        <taxon>Potato mop-top virus</taxon>
    </lineage>
</organism>
<organismHost>
    <name type="scientific">Solanum nigrum</name>
    <name type="common">Black nightshade</name>
    <dbReference type="NCBI Taxonomy" id="4112"/>
</organismHost>
<organismHost>
    <name type="scientific">Solanum tuberosum</name>
    <name type="common">Potato</name>
    <dbReference type="NCBI Taxonomy" id="4113"/>
</organismHost>
<gene>
    <name type="primary">rep</name>
    <name type="ORF">ORF1-1bis</name>
</gene>